<feature type="chain" id="PRO_0000229786" description="Protein BEX4">
    <location>
        <begin position="1"/>
        <end position="118"/>
    </location>
</feature>
<feature type="region of interest" description="Disordered" evidence="4">
    <location>
        <begin position="14"/>
        <end position="50"/>
    </location>
</feature>
<feature type="region of interest" description="Interaction with alpha-tubulin" evidence="2">
    <location>
        <begin position="30"/>
        <end position="118"/>
    </location>
</feature>
<feature type="region of interest" description="Interaction with SIRT2" evidence="2">
    <location>
        <begin position="30"/>
        <end position="88"/>
    </location>
</feature>
<feature type="compositionally biased region" description="Basic and acidic residues" evidence="4">
    <location>
        <begin position="28"/>
        <end position="44"/>
    </location>
</feature>
<feature type="binding site" evidence="3">
    <location>
        <position position="115"/>
    </location>
    <ligand>
        <name>Zn(2+)</name>
        <dbReference type="ChEBI" id="CHEBI:29105"/>
        <note>ligand shared with FEM1B</note>
    </ligand>
</feature>
<protein>
    <recommendedName>
        <fullName evidence="7">Protein BEX4</fullName>
    </recommendedName>
    <alternativeName>
        <fullName evidence="9">Brain-expressed X-linked protein 4</fullName>
    </alternativeName>
</protein>
<dbReference type="EMBL" id="AY833557">
    <property type="protein sequence ID" value="AAX40675.1"/>
    <property type="molecule type" value="mRNA"/>
</dbReference>
<dbReference type="EMBL" id="BC128698">
    <property type="protein sequence ID" value="AAI28699.1"/>
    <property type="molecule type" value="mRNA"/>
</dbReference>
<dbReference type="RefSeq" id="NP_001032643.1">
    <property type="nucleotide sequence ID" value="NM_001037554.2"/>
</dbReference>
<dbReference type="SMR" id="Q3MKP9"/>
<dbReference type="FunCoup" id="Q3MKP9">
    <property type="interactions" value="9"/>
</dbReference>
<dbReference type="STRING" id="10116.ENSRNOP00000069517"/>
<dbReference type="PhosphoSitePlus" id="Q3MKP9"/>
<dbReference type="PaxDb" id="10116-ENSRNOP00000035429"/>
<dbReference type="Ensembl" id="ENSRNOT00000102634.1">
    <property type="protein sequence ID" value="ENSRNOP00000086315.1"/>
    <property type="gene ID" value="ENSRNOG00000062806.1"/>
</dbReference>
<dbReference type="GeneID" id="501624"/>
<dbReference type="KEGG" id="rno:501624"/>
<dbReference type="UCSC" id="RGD:1564749">
    <property type="organism name" value="rat"/>
</dbReference>
<dbReference type="AGR" id="RGD:1564749"/>
<dbReference type="CTD" id="56271"/>
<dbReference type="RGD" id="1564749">
    <property type="gene designation" value="Bex4"/>
</dbReference>
<dbReference type="eggNOG" id="ENOG502TDUR">
    <property type="taxonomic scope" value="Eukaryota"/>
</dbReference>
<dbReference type="GeneTree" id="ENSGT00940000162932"/>
<dbReference type="HOGENOM" id="CLU_123122_0_0_1"/>
<dbReference type="InParanoid" id="Q3MKP9"/>
<dbReference type="OMA" id="WAIPSRH"/>
<dbReference type="OrthoDB" id="9836927at2759"/>
<dbReference type="PhylomeDB" id="Q3MKP9"/>
<dbReference type="TreeFam" id="TF337909"/>
<dbReference type="PRO" id="PR:Q3MKP9"/>
<dbReference type="Proteomes" id="UP000002494">
    <property type="component" value="Chromosome X"/>
</dbReference>
<dbReference type="Bgee" id="ENSRNOG00000060103">
    <property type="expression patterns" value="Expressed in cerebellum and 20 other cell types or tissues"/>
</dbReference>
<dbReference type="GO" id="GO:0005737">
    <property type="term" value="C:cytoplasm"/>
    <property type="evidence" value="ECO:0000314"/>
    <property type="project" value="MGI"/>
</dbReference>
<dbReference type="GO" id="GO:0005874">
    <property type="term" value="C:microtubule"/>
    <property type="evidence" value="ECO:0000250"/>
    <property type="project" value="UniProtKB"/>
</dbReference>
<dbReference type="GO" id="GO:0005634">
    <property type="term" value="C:nucleus"/>
    <property type="evidence" value="ECO:0000314"/>
    <property type="project" value="MGI"/>
</dbReference>
<dbReference type="GO" id="GO:0000922">
    <property type="term" value="C:spindle pole"/>
    <property type="evidence" value="ECO:0000250"/>
    <property type="project" value="UniProtKB"/>
</dbReference>
<dbReference type="GO" id="GO:0043014">
    <property type="term" value="F:alpha-tubulin binding"/>
    <property type="evidence" value="ECO:0000250"/>
    <property type="project" value="UniProtKB"/>
</dbReference>
<dbReference type="GO" id="GO:0042826">
    <property type="term" value="F:histone deacetylase binding"/>
    <property type="evidence" value="ECO:0000266"/>
    <property type="project" value="RGD"/>
</dbReference>
<dbReference type="GO" id="GO:0046872">
    <property type="term" value="F:metal ion binding"/>
    <property type="evidence" value="ECO:0007669"/>
    <property type="project" value="UniProtKB-KW"/>
</dbReference>
<dbReference type="GO" id="GO:0140678">
    <property type="term" value="F:molecular function inhibitor activity"/>
    <property type="evidence" value="ECO:0000250"/>
    <property type="project" value="UniProtKB"/>
</dbReference>
<dbReference type="GO" id="GO:0007059">
    <property type="term" value="P:chromosome segregation"/>
    <property type="evidence" value="ECO:0000250"/>
    <property type="project" value="UniProtKB"/>
</dbReference>
<dbReference type="GO" id="GO:0031397">
    <property type="term" value="P:negative regulation of protein ubiquitination"/>
    <property type="evidence" value="ECO:0000250"/>
    <property type="project" value="UniProtKB"/>
</dbReference>
<dbReference type="GO" id="GO:1904428">
    <property type="term" value="P:negative regulation of tubulin deacetylation"/>
    <property type="evidence" value="ECO:0000250"/>
    <property type="project" value="UniProtKB"/>
</dbReference>
<dbReference type="GO" id="GO:0030334">
    <property type="term" value="P:regulation of cell migration"/>
    <property type="evidence" value="ECO:0000266"/>
    <property type="project" value="RGD"/>
</dbReference>
<dbReference type="GO" id="GO:0042127">
    <property type="term" value="P:regulation of cell population proliferation"/>
    <property type="evidence" value="ECO:0000266"/>
    <property type="project" value="RGD"/>
</dbReference>
<dbReference type="GO" id="GO:0007346">
    <property type="term" value="P:regulation of mitotic cell cycle"/>
    <property type="evidence" value="ECO:0000266"/>
    <property type="project" value="RGD"/>
</dbReference>
<dbReference type="InterPro" id="IPR007623">
    <property type="entry name" value="BEX"/>
</dbReference>
<dbReference type="InterPro" id="IPR021156">
    <property type="entry name" value="TF_A-like/BEX"/>
</dbReference>
<dbReference type="PANTHER" id="PTHR13987">
    <property type="entry name" value="PROTEIN BEX4"/>
    <property type="match status" value="1"/>
</dbReference>
<dbReference type="PANTHER" id="PTHR13987:SF3">
    <property type="entry name" value="PROTEIN BEX4"/>
    <property type="match status" value="1"/>
</dbReference>
<dbReference type="Pfam" id="PF04538">
    <property type="entry name" value="BEX"/>
    <property type="match status" value="1"/>
</dbReference>
<dbReference type="PIRSF" id="PIRSF008633">
    <property type="entry name" value="BEX"/>
    <property type="match status" value="1"/>
</dbReference>
<gene>
    <name evidence="6 9" type="primary">Bex4</name>
</gene>
<comment type="function">
    <text evidence="1 2">May play a role in microtubule deacetylation by negatively regulating the SIRT2 deacetylase activity toward alpha-tubulin and thereby participate in the control of cell cycle progression and genomic stability (By similarity). In absence of reductive stress, acts as a pseudosubstrate for the CRL2(FEM1B) complex: associates with FEM1B via zinc, thereby preventing association between FEM1B and its substrates (By similarity).</text>
</comment>
<comment type="subunit">
    <text evidence="2">Interacts with alpha-tubulin. Interacts with SIRT2.</text>
</comment>
<comment type="subcellular location">
    <subcellularLocation>
        <location evidence="2">Cytoplasm</location>
        <location evidence="2">Cytoskeleton</location>
        <location evidence="2">Spindle pole</location>
    </subcellularLocation>
    <subcellularLocation>
        <location evidence="5">Nucleus</location>
    </subcellularLocation>
    <subcellularLocation>
        <location evidence="5">Cytoplasm</location>
    </subcellularLocation>
    <text evidence="2">Also localizes to microtubules.</text>
</comment>
<comment type="PTM">
    <text evidence="8">Ubiquitinated and degraded by the proteasome.</text>
</comment>
<comment type="similarity">
    <text evidence="7">Belongs to the BEX family.</text>
</comment>
<evidence type="ECO:0000250" key="1">
    <source>
        <dbReference type="UniProtKB" id="Q9CWT2"/>
    </source>
</evidence>
<evidence type="ECO:0000250" key="2">
    <source>
        <dbReference type="UniProtKB" id="Q9NWD9"/>
    </source>
</evidence>
<evidence type="ECO:0000250" key="3">
    <source>
        <dbReference type="UniProtKB" id="Q9WTZ9"/>
    </source>
</evidence>
<evidence type="ECO:0000256" key="4">
    <source>
        <dbReference type="SAM" id="MobiDB-lite"/>
    </source>
</evidence>
<evidence type="ECO:0000269" key="5">
    <source>
    </source>
</evidence>
<evidence type="ECO:0000303" key="6">
    <source>
    </source>
</evidence>
<evidence type="ECO:0000305" key="7"/>
<evidence type="ECO:0000305" key="8">
    <source>
    </source>
</evidence>
<evidence type="ECO:0000312" key="9">
    <source>
        <dbReference type="RGD" id="1564749"/>
    </source>
</evidence>
<organism>
    <name type="scientific">Rattus norvegicus</name>
    <name type="common">Rat</name>
    <dbReference type="NCBI Taxonomy" id="10116"/>
    <lineage>
        <taxon>Eukaryota</taxon>
        <taxon>Metazoa</taxon>
        <taxon>Chordata</taxon>
        <taxon>Craniata</taxon>
        <taxon>Vertebrata</taxon>
        <taxon>Euteleostomi</taxon>
        <taxon>Mammalia</taxon>
        <taxon>Eutheria</taxon>
        <taxon>Euarchontoglires</taxon>
        <taxon>Glires</taxon>
        <taxon>Rodentia</taxon>
        <taxon>Myomorpha</taxon>
        <taxon>Muroidea</taxon>
        <taxon>Muridae</taxon>
        <taxon>Murinae</taxon>
        <taxon>Rattus</taxon>
    </lineage>
</organism>
<accession>Q3MKP9</accession>
<accession>A1A5L0</accession>
<name>BEX4_RAT</name>
<reference key="1">
    <citation type="journal article" date="2005" name="Gene">
        <title>Characterization of the Bex gene family in humans, mice, and rats.</title>
        <authorList>
            <person name="Alvarez E."/>
            <person name="Zhou W."/>
            <person name="Witta S.E."/>
            <person name="Freed C.R."/>
        </authorList>
    </citation>
    <scope>NUCLEOTIDE SEQUENCE [MRNA]</scope>
    <scope>SUBCELLULAR LOCATION</scope>
    <scope>DEGRADATION BY THE PROTEASOME</scope>
    <source>
        <strain>Sprague-Dawley</strain>
    </source>
</reference>
<reference key="2">
    <citation type="journal article" date="2004" name="Genome Res.">
        <title>The status, quality, and expansion of the NIH full-length cDNA project: the Mammalian Gene Collection (MGC).</title>
        <authorList>
            <consortium name="The MGC Project Team"/>
        </authorList>
    </citation>
    <scope>NUCLEOTIDE SEQUENCE [LARGE SCALE MRNA]</scope>
    <source>
        <tissue>Brain</tissue>
    </source>
</reference>
<keyword id="KW-0963">Cytoplasm</keyword>
<keyword id="KW-0206">Cytoskeleton</keyword>
<keyword id="KW-0479">Metal-binding</keyword>
<keyword id="KW-0539">Nucleus</keyword>
<keyword id="KW-1185">Reference proteome</keyword>
<keyword id="KW-0832">Ubl conjugation</keyword>
<keyword id="KW-0862">Zinc</keyword>
<proteinExistence type="inferred from homology"/>
<sequence length="118" mass="13721">MASKVKQVILDLTVEKDKKNKKGGKASKQSEEESHHLEEVENKKPGGNVRRKVRRLVPNFLWAIPNRHVDHSEGGEEVGRFVGQVMEAKRKSKEQQMRPYTRFRTPEPDNHYDFCLIP</sequence>